<proteinExistence type="evidence at protein level"/>
<reference key="1">
    <citation type="journal article" date="2000" name="Mol. Gen. Genet.">
        <title>The Aspergillus nidulans creC gene involved in carbon catabolite repression encodes a WD40 repeat protein.</title>
        <authorList>
            <person name="Todd R.B."/>
            <person name="Lockington R.A."/>
            <person name="Kelly J.M."/>
        </authorList>
    </citation>
    <scope>NUCLEOTIDE SEQUENCE [GENOMIC DNA]</scope>
    <scope>FUNCTION</scope>
</reference>
<reference key="2">
    <citation type="journal article" date="2005" name="Nature">
        <title>Sequencing of Aspergillus nidulans and comparative analysis with A. fumigatus and A. oryzae.</title>
        <authorList>
            <person name="Galagan J.E."/>
            <person name="Calvo S.E."/>
            <person name="Cuomo C."/>
            <person name="Ma L.-J."/>
            <person name="Wortman J.R."/>
            <person name="Batzoglou S."/>
            <person name="Lee S.-I."/>
            <person name="Bastuerkmen M."/>
            <person name="Spevak C.C."/>
            <person name="Clutterbuck J."/>
            <person name="Kapitonov V."/>
            <person name="Jurka J."/>
            <person name="Scazzocchio C."/>
            <person name="Farman M.L."/>
            <person name="Butler J."/>
            <person name="Purcell S."/>
            <person name="Harris S."/>
            <person name="Braus G.H."/>
            <person name="Draht O."/>
            <person name="Busch S."/>
            <person name="D'Enfert C."/>
            <person name="Bouchier C."/>
            <person name="Goldman G.H."/>
            <person name="Bell-Pedersen D."/>
            <person name="Griffiths-Jones S."/>
            <person name="Doonan J.H."/>
            <person name="Yu J."/>
            <person name="Vienken K."/>
            <person name="Pain A."/>
            <person name="Freitag M."/>
            <person name="Selker E.U."/>
            <person name="Archer D.B."/>
            <person name="Penalva M.A."/>
            <person name="Oakley B.R."/>
            <person name="Momany M."/>
            <person name="Tanaka T."/>
            <person name="Kumagai T."/>
            <person name="Asai K."/>
            <person name="Machida M."/>
            <person name="Nierman W.C."/>
            <person name="Denning D.W."/>
            <person name="Caddick M.X."/>
            <person name="Hynes M."/>
            <person name="Paoletti M."/>
            <person name="Fischer R."/>
            <person name="Miller B.L."/>
            <person name="Dyer P.S."/>
            <person name="Sachs M.S."/>
            <person name="Osmani S.A."/>
            <person name="Birren B.W."/>
        </authorList>
    </citation>
    <scope>NUCLEOTIDE SEQUENCE [LARGE SCALE GENOMIC DNA]</scope>
    <source>
        <strain>FGSC A4 / ATCC 38163 / CBS 112.46 / NRRL 194 / M139</strain>
    </source>
</reference>
<reference key="3">
    <citation type="journal article" date="2009" name="Fungal Genet. Biol.">
        <title>The 2008 update of the Aspergillus nidulans genome annotation: a community effort.</title>
        <authorList>
            <person name="Wortman J.R."/>
            <person name="Gilsenan J.M."/>
            <person name="Joardar V."/>
            <person name="Deegan J."/>
            <person name="Clutterbuck J."/>
            <person name="Andersen M.R."/>
            <person name="Archer D."/>
            <person name="Bencina M."/>
            <person name="Braus G."/>
            <person name="Coutinho P."/>
            <person name="von Dohren H."/>
            <person name="Doonan J."/>
            <person name="Driessen A.J."/>
            <person name="Durek P."/>
            <person name="Espeso E."/>
            <person name="Fekete E."/>
            <person name="Flipphi M."/>
            <person name="Estrada C.G."/>
            <person name="Geysens S."/>
            <person name="Goldman G."/>
            <person name="de Groot P.W."/>
            <person name="Hansen K."/>
            <person name="Harris S.D."/>
            <person name="Heinekamp T."/>
            <person name="Helmstaedt K."/>
            <person name="Henrissat B."/>
            <person name="Hofmann G."/>
            <person name="Homan T."/>
            <person name="Horio T."/>
            <person name="Horiuchi H."/>
            <person name="James S."/>
            <person name="Jones M."/>
            <person name="Karaffa L."/>
            <person name="Karanyi Z."/>
            <person name="Kato M."/>
            <person name="Keller N."/>
            <person name="Kelly D.E."/>
            <person name="Kiel J.A."/>
            <person name="Kim J.M."/>
            <person name="van der Klei I.J."/>
            <person name="Klis F.M."/>
            <person name="Kovalchuk A."/>
            <person name="Krasevec N."/>
            <person name="Kubicek C.P."/>
            <person name="Liu B."/>
            <person name="Maccabe A."/>
            <person name="Meyer V."/>
            <person name="Mirabito P."/>
            <person name="Miskei M."/>
            <person name="Mos M."/>
            <person name="Mullins J."/>
            <person name="Nelson D.R."/>
            <person name="Nielsen J."/>
            <person name="Oakley B.R."/>
            <person name="Osmani S.A."/>
            <person name="Pakula T."/>
            <person name="Paszewski A."/>
            <person name="Paulsen I."/>
            <person name="Pilsyk S."/>
            <person name="Pocsi I."/>
            <person name="Punt P.J."/>
            <person name="Ram A.F."/>
            <person name="Ren Q."/>
            <person name="Robellet X."/>
            <person name="Robson G."/>
            <person name="Seiboth B."/>
            <person name="van Solingen P."/>
            <person name="Specht T."/>
            <person name="Sun J."/>
            <person name="Taheri-Talesh N."/>
            <person name="Takeshita N."/>
            <person name="Ussery D."/>
            <person name="vanKuyk P.A."/>
            <person name="Visser H."/>
            <person name="van de Vondervoort P.J."/>
            <person name="de Vries R.P."/>
            <person name="Walton J."/>
            <person name="Xiang X."/>
            <person name="Xiong Y."/>
            <person name="Zeng A.P."/>
            <person name="Brandt B.W."/>
            <person name="Cornell M.J."/>
            <person name="van den Hondel C.A."/>
            <person name="Visser J."/>
            <person name="Oliver S.G."/>
            <person name="Turner G."/>
        </authorList>
    </citation>
    <scope>GENOME REANNOTATION</scope>
    <source>
        <strain>FGSC A4 / ATCC 38163 / CBS 112.46 / NRRL 194 / M139</strain>
    </source>
</reference>
<reference key="4">
    <citation type="journal article" date="2001" name="Mol. Microbiol.">
        <title>Carbon catabolite repression in Aspergillus nidulans involves deubiquitination.</title>
        <authorList>
            <person name="Lockington R.A."/>
            <person name="Kelly J.M."/>
        </authorList>
    </citation>
    <scope>FUNCTION</scope>
</reference>
<reference key="5">
    <citation type="journal article" date="2002" name="Mol. Microbiol.">
        <title>The WD40-repeat protein CreC interacts with and stabilizes the deubiquitinating enzyme CreB in vivo in Aspergillus nidulans.</title>
        <authorList>
            <person name="Lockington R.A."/>
            <person name="Kelly J.M."/>
        </authorList>
    </citation>
    <scope>FUNCTION</scope>
    <scope>INTERACTION WITH CREB</scope>
</reference>
<reference key="6">
    <citation type="journal article" date="2003" name="Genetics">
        <title>Molecular characterization and analysis of the acrB gene of Aspergillus nidulans: a gene identified by genetic interaction as a component of the regulatory network that includes the CreB deubiquitination enzyme.</title>
        <authorList>
            <person name="Boase N.A."/>
            <person name="Lockington R.A."/>
            <person name="Adams J.R."/>
            <person name="Rodbourn L."/>
            <person name="Kelly J.M."/>
        </authorList>
    </citation>
    <scope>FUNCTION</scope>
</reference>
<reference key="7">
    <citation type="journal article" date="2008" name="Curr. Genet.">
        <title>The interaction of induction, repression and starvation in the regulation of extracellular proteases in Aspergillus nidulans: evidence for a role for CreA in the response to carbon starvation.</title>
        <authorList>
            <person name="Katz M.E."/>
            <person name="Bernardo S.M."/>
            <person name="Cheetham B.F."/>
        </authorList>
    </citation>
    <scope>FUNCTION</scope>
</reference>
<dbReference type="EMBL" id="AF136452">
    <property type="protein sequence ID" value="AAF63188.1"/>
    <property type="status" value="ALT_SEQ"/>
    <property type="molecule type" value="Genomic_DNA"/>
</dbReference>
<dbReference type="EMBL" id="AACD01000067">
    <property type="protein sequence ID" value="EAA59427.1"/>
    <property type="status" value="ALT_SEQ"/>
    <property type="molecule type" value="Genomic_DNA"/>
</dbReference>
<dbReference type="EMBL" id="BN001302">
    <property type="protein sequence ID" value="CBF74571.1"/>
    <property type="molecule type" value="Genomic_DNA"/>
</dbReference>
<dbReference type="RefSeq" id="XP_661770.1">
    <property type="nucleotide sequence ID" value="XM_656678.1"/>
</dbReference>
<dbReference type="SMR" id="Q9P4R5"/>
<dbReference type="STRING" id="227321.Q9P4R5"/>
<dbReference type="EnsemblFungi" id="CBF74571">
    <property type="protein sequence ID" value="CBF74571"/>
    <property type="gene ID" value="ANIA_04166"/>
</dbReference>
<dbReference type="VEuPathDB" id="FungiDB:AN4166"/>
<dbReference type="eggNOG" id="KOG2394">
    <property type="taxonomic scope" value="Eukaryota"/>
</dbReference>
<dbReference type="HOGENOM" id="CLU_016971_1_1_1"/>
<dbReference type="InParanoid" id="Q9P4R5"/>
<dbReference type="OMA" id="MCVCWSP"/>
<dbReference type="OrthoDB" id="3367at2759"/>
<dbReference type="Proteomes" id="UP000000560">
    <property type="component" value="Chromosome II"/>
</dbReference>
<dbReference type="GO" id="GO:0005634">
    <property type="term" value="C:nucleus"/>
    <property type="evidence" value="ECO:0000303"/>
    <property type="project" value="UniProtKB"/>
</dbReference>
<dbReference type="GO" id="GO:0045013">
    <property type="term" value="P:carbon catabolite repression of transcription"/>
    <property type="evidence" value="ECO:0000315"/>
    <property type="project" value="UniProtKB"/>
</dbReference>
<dbReference type="FunFam" id="2.130.10.10:FF:000531">
    <property type="entry name" value="Probable catabolite repression protein creC"/>
    <property type="match status" value="1"/>
</dbReference>
<dbReference type="Gene3D" id="2.130.10.10">
    <property type="entry name" value="YVTN repeat-like/Quinoprotein amine dehydrogenase"/>
    <property type="match status" value="1"/>
</dbReference>
<dbReference type="InterPro" id="IPR015943">
    <property type="entry name" value="WD40/YVTN_repeat-like_dom_sf"/>
</dbReference>
<dbReference type="InterPro" id="IPR036322">
    <property type="entry name" value="WD40_repeat_dom_sf"/>
</dbReference>
<dbReference type="InterPro" id="IPR001680">
    <property type="entry name" value="WD40_rpt"/>
</dbReference>
<dbReference type="InterPro" id="IPR051362">
    <property type="entry name" value="WD_repeat_creC_regulators"/>
</dbReference>
<dbReference type="PANTHER" id="PTHR14107:SF16">
    <property type="entry name" value="AT02583P"/>
    <property type="match status" value="1"/>
</dbReference>
<dbReference type="PANTHER" id="PTHR14107">
    <property type="entry name" value="WD REPEAT PROTEIN"/>
    <property type="match status" value="1"/>
</dbReference>
<dbReference type="Pfam" id="PF00400">
    <property type="entry name" value="WD40"/>
    <property type="match status" value="3"/>
</dbReference>
<dbReference type="SMART" id="SM00320">
    <property type="entry name" value="WD40"/>
    <property type="match status" value="5"/>
</dbReference>
<dbReference type="SUPFAM" id="SSF50978">
    <property type="entry name" value="WD40 repeat-like"/>
    <property type="match status" value="1"/>
</dbReference>
<dbReference type="PROSITE" id="PS00678">
    <property type="entry name" value="WD_REPEATS_1"/>
    <property type="match status" value="1"/>
</dbReference>
<dbReference type="PROSITE" id="PS50082">
    <property type="entry name" value="WD_REPEATS_2"/>
    <property type="match status" value="1"/>
</dbReference>
<dbReference type="PROSITE" id="PS50294">
    <property type="entry name" value="WD_REPEATS_REGION"/>
    <property type="match status" value="1"/>
</dbReference>
<comment type="function">
    <text evidence="2 3 4 5 6">Component of the regulatory network controlling carbon source utilization through ubiquitination and deubiquitination involving creA, creB, creC, creD and acrB. Required to prevent the proteolysis of the CreB deubiquitinating enzyme in the absence of carbon catabolite repression. CreB deubiquitinating enzyme stabilized in a complex with the CreC leads to the expression of genes such as those in the proline and quinate pathways.</text>
</comment>
<comment type="subunit">
    <text evidence="4">Interacts with creB.</text>
</comment>
<comment type="similarity">
    <text evidence="7">Belongs to the WD repeat creC family.</text>
</comment>
<comment type="sequence caution" evidence="7">
    <conflict type="erroneous gene model prediction">
        <sequence resource="EMBL-CDS" id="AAF63188"/>
    </conflict>
</comment>
<comment type="sequence caution" evidence="7">
    <conflict type="erroneous gene model prediction">
        <sequence resource="EMBL-CDS" id="EAA59427"/>
    </conflict>
</comment>
<feature type="chain" id="PRO_0000050943" description="Catabolite repression protein creC">
    <location>
        <begin position="1"/>
        <end position="592"/>
    </location>
</feature>
<feature type="repeat" description="WD 1">
    <location>
        <begin position="248"/>
        <end position="288"/>
    </location>
</feature>
<feature type="repeat" description="WD 2">
    <location>
        <begin position="327"/>
        <end position="368"/>
    </location>
</feature>
<feature type="repeat" description="WD 3">
    <location>
        <begin position="369"/>
        <end position="408"/>
    </location>
</feature>
<feature type="repeat" description="WD 4">
    <location>
        <begin position="411"/>
        <end position="455"/>
    </location>
</feature>
<feature type="repeat" description="WD 5">
    <location>
        <begin position="529"/>
        <end position="566"/>
    </location>
</feature>
<feature type="region of interest" description="Disordered" evidence="1">
    <location>
        <begin position="119"/>
        <end position="140"/>
    </location>
</feature>
<feature type="region of interest" description="Disordered" evidence="1">
    <location>
        <begin position="459"/>
        <end position="513"/>
    </location>
</feature>
<feature type="region of interest" description="Disordered" evidence="1">
    <location>
        <begin position="556"/>
        <end position="592"/>
    </location>
</feature>
<feature type="compositionally biased region" description="Polar residues" evidence="1">
    <location>
        <begin position="484"/>
        <end position="499"/>
    </location>
</feature>
<feature type="compositionally biased region" description="Polar residues" evidence="1">
    <location>
        <begin position="564"/>
        <end position="576"/>
    </location>
</feature>
<gene>
    <name type="primary">creC</name>
    <name type="ORF">AN4166</name>
</gene>
<sequence length="592" mass="65511">MFVLPPPPPRYTVPVAYAAGASNGMAVPIVETNNIITHPEKGCPLQVGEGTYQLQDDLHLATPPPHPSEAPIINPNPLATVPNPPTSGVKLSLISLGLRNKTAFPSKVQVTARPFGDGNSALAAAPVKDPSKKRKPKNNIIKSSSSFVSRVIIHEATTKRLNDRDPEGLFAFANINRAFQWLDLSSKHKDEPLSKILFTKAHMISHDVNEITKSSAHIDVIMGSSAGDIFWYEPISQKYARINKNGIINSSPVTHIKWIPGSENFFIAAHENGQLVVYDKEKEDALFIPELPEQSAESVKPSRWSLQVLKSVNSKNQKANPVAVWRLANQKITQFAFSPDHRHLAVVLEDGTLRLMDYLQEEVLDVFRSYYGGFTCVCWSPDGKYIVTGGQDDLVTIWSLPERKIIARCQGHDSWVSAVAFDPWRCDERTYRIGSVGDDCNLLLWDFSVGMLHRPKVHHQTSARHRTSLIAPSSQQPNRHRADSSGNRMRSDSQRTAADSESAPDQPVQHPVESRARTALLPPIMSKAVGEDPICWLGFQEDTIMTSSLEGHIRTWDRPRENISDNYGDQKSSETLGTGKEAGHPASSMGSL</sequence>
<evidence type="ECO:0000256" key="1">
    <source>
        <dbReference type="SAM" id="MobiDB-lite"/>
    </source>
</evidence>
<evidence type="ECO:0000269" key="2">
    <source>
    </source>
</evidence>
<evidence type="ECO:0000269" key="3">
    <source>
    </source>
</evidence>
<evidence type="ECO:0000269" key="4">
    <source>
    </source>
</evidence>
<evidence type="ECO:0000269" key="5">
    <source>
    </source>
</evidence>
<evidence type="ECO:0000269" key="6">
    <source>
    </source>
</evidence>
<evidence type="ECO:0000305" key="7"/>
<keyword id="KW-1185">Reference proteome</keyword>
<keyword id="KW-0677">Repeat</keyword>
<keyword id="KW-0804">Transcription</keyword>
<keyword id="KW-0805">Transcription regulation</keyword>
<keyword id="KW-0833">Ubl conjugation pathway</keyword>
<keyword id="KW-0853">WD repeat</keyword>
<protein>
    <recommendedName>
        <fullName>Catabolite repression protein creC</fullName>
    </recommendedName>
</protein>
<name>CREC_EMENI</name>
<organism>
    <name type="scientific">Emericella nidulans (strain FGSC A4 / ATCC 38163 / CBS 112.46 / NRRL 194 / M139)</name>
    <name type="common">Aspergillus nidulans</name>
    <dbReference type="NCBI Taxonomy" id="227321"/>
    <lineage>
        <taxon>Eukaryota</taxon>
        <taxon>Fungi</taxon>
        <taxon>Dikarya</taxon>
        <taxon>Ascomycota</taxon>
        <taxon>Pezizomycotina</taxon>
        <taxon>Eurotiomycetes</taxon>
        <taxon>Eurotiomycetidae</taxon>
        <taxon>Eurotiales</taxon>
        <taxon>Aspergillaceae</taxon>
        <taxon>Aspergillus</taxon>
        <taxon>Aspergillus subgen. Nidulantes</taxon>
    </lineage>
</organism>
<accession>Q9P4R5</accession>
<accession>C8V4P7</accession>
<accession>Q5B5L4</accession>